<dbReference type="EC" id="3.5.4.19" evidence="1 2"/>
<dbReference type="EMBL" id="X04021">
    <property type="protein sequence ID" value="CAA27649.1"/>
    <property type="molecule type" value="Genomic_DNA"/>
</dbReference>
<dbReference type="PIR" id="S28723">
    <property type="entry name" value="S28723"/>
</dbReference>
<dbReference type="SMR" id="Q50837"/>
<dbReference type="GeneID" id="5324753"/>
<dbReference type="OMA" id="TGYRSCF"/>
<dbReference type="BRENDA" id="3.5.4.19">
    <property type="organism ID" value="3267"/>
</dbReference>
<dbReference type="UniPathway" id="UPA00031">
    <property type="reaction ID" value="UER00008"/>
</dbReference>
<dbReference type="GO" id="GO:0005737">
    <property type="term" value="C:cytoplasm"/>
    <property type="evidence" value="ECO:0007669"/>
    <property type="project" value="UniProtKB-SubCell"/>
</dbReference>
<dbReference type="GO" id="GO:0000287">
    <property type="term" value="F:magnesium ion binding"/>
    <property type="evidence" value="ECO:0007669"/>
    <property type="project" value="UniProtKB-UniRule"/>
</dbReference>
<dbReference type="GO" id="GO:0004635">
    <property type="term" value="F:phosphoribosyl-AMP cyclohydrolase activity"/>
    <property type="evidence" value="ECO:0007669"/>
    <property type="project" value="UniProtKB-UniRule"/>
</dbReference>
<dbReference type="GO" id="GO:0008270">
    <property type="term" value="F:zinc ion binding"/>
    <property type="evidence" value="ECO:0007669"/>
    <property type="project" value="UniProtKB-UniRule"/>
</dbReference>
<dbReference type="GO" id="GO:0000105">
    <property type="term" value="P:L-histidine biosynthetic process"/>
    <property type="evidence" value="ECO:0007669"/>
    <property type="project" value="UniProtKB-UniRule"/>
</dbReference>
<dbReference type="FunFam" id="3.10.20.810:FF:000001">
    <property type="entry name" value="Histidine biosynthesis bifunctional protein HisIE"/>
    <property type="match status" value="1"/>
</dbReference>
<dbReference type="Gene3D" id="3.10.20.810">
    <property type="entry name" value="Phosphoribosyl-AMP cyclohydrolase"/>
    <property type="match status" value="1"/>
</dbReference>
<dbReference type="HAMAP" id="MF_01021">
    <property type="entry name" value="HisI"/>
    <property type="match status" value="1"/>
</dbReference>
<dbReference type="InterPro" id="IPR026660">
    <property type="entry name" value="PRA-CH"/>
</dbReference>
<dbReference type="InterPro" id="IPR002496">
    <property type="entry name" value="PRib_AMP_CycHydrolase_dom"/>
</dbReference>
<dbReference type="InterPro" id="IPR038019">
    <property type="entry name" value="PRib_AMP_CycHydrolase_sf"/>
</dbReference>
<dbReference type="NCBIfam" id="NF000768">
    <property type="entry name" value="PRK00051.1"/>
    <property type="match status" value="1"/>
</dbReference>
<dbReference type="PANTHER" id="PTHR42945">
    <property type="entry name" value="HISTIDINE BIOSYNTHESIS BIFUNCTIONAL PROTEIN"/>
    <property type="match status" value="1"/>
</dbReference>
<dbReference type="PANTHER" id="PTHR42945:SF1">
    <property type="entry name" value="HISTIDINE BIOSYNTHESIS BIFUNCTIONAL PROTEIN HIS7"/>
    <property type="match status" value="1"/>
</dbReference>
<dbReference type="Pfam" id="PF01502">
    <property type="entry name" value="PRA-CH"/>
    <property type="match status" value="1"/>
</dbReference>
<dbReference type="SUPFAM" id="SSF141734">
    <property type="entry name" value="HisI-like"/>
    <property type="match status" value="1"/>
</dbReference>
<keyword id="KW-0028">Amino-acid biosynthesis</keyword>
<keyword id="KW-0963">Cytoplasm</keyword>
<keyword id="KW-0903">Direct protein sequencing</keyword>
<keyword id="KW-0368">Histidine biosynthesis</keyword>
<keyword id="KW-0378">Hydrolase</keyword>
<keyword id="KW-0460">Magnesium</keyword>
<keyword id="KW-0479">Metal-binding</keyword>
<keyword id="KW-0862">Zinc</keyword>
<evidence type="ECO:0000255" key="1">
    <source>
        <dbReference type="HAMAP-Rule" id="MF_01021"/>
    </source>
</evidence>
<evidence type="ECO:0000269" key="2">
    <source>
    </source>
</evidence>
<accession>Q50837</accession>
<feature type="initiator methionine" description="Removed" evidence="2">
    <location>
        <position position="1"/>
    </location>
</feature>
<feature type="chain" id="PRO_0000136512" description="Phosphoribosyl-AMP cyclohydrolase">
    <location>
        <begin position="2"/>
        <end position="136"/>
    </location>
</feature>
<feature type="binding site" evidence="1">
    <location>
        <position position="92"/>
    </location>
    <ligand>
        <name>Mg(2+)</name>
        <dbReference type="ChEBI" id="CHEBI:18420"/>
    </ligand>
</feature>
<feature type="binding site" evidence="1">
    <location>
        <position position="93"/>
    </location>
    <ligand>
        <name>Zn(2+)</name>
        <dbReference type="ChEBI" id="CHEBI:29105"/>
        <note>ligand shared between dimeric partners</note>
    </ligand>
</feature>
<feature type="binding site" evidence="1">
    <location>
        <position position="94"/>
    </location>
    <ligand>
        <name>Mg(2+)</name>
        <dbReference type="ChEBI" id="CHEBI:18420"/>
    </ligand>
</feature>
<feature type="binding site" evidence="1">
    <location>
        <position position="96"/>
    </location>
    <ligand>
        <name>Mg(2+)</name>
        <dbReference type="ChEBI" id="CHEBI:18420"/>
    </ligand>
</feature>
<feature type="binding site" evidence="1">
    <location>
        <position position="109"/>
    </location>
    <ligand>
        <name>Zn(2+)</name>
        <dbReference type="ChEBI" id="CHEBI:29105"/>
        <note>ligand shared between dimeric partners</note>
    </ligand>
</feature>
<feature type="binding site" evidence="1">
    <location>
        <position position="116"/>
    </location>
    <ligand>
        <name>Zn(2+)</name>
        <dbReference type="ChEBI" id="CHEBI:29105"/>
        <note>ligand shared between dimeric partners</note>
    </ligand>
</feature>
<sequence>MGIKDIDIKENFGKIVQNMDLKFRKIDDKELLIAIAIDKYKNVLMTAFMDKESLKMTLKTGLMHYFSTSRNKIWMKGEESKNVQKVLEVFKDCDGDALLFIVEQTGWACHEGYMSCFHNKVDLNTGNSTVIGDKLD</sequence>
<reference key="1">
    <citation type="journal article" date="1986" name="Mol. Gen. Genet.">
        <title>Conservation of primary structure in the hisI gene of the archaebacterium, Methanococcus vannielii, the eubacterium Escherichia coli, and the eucaryote Saccharomyces cerevisiae.</title>
        <authorList>
            <person name="Beckler G.S."/>
            <person name="Reeve J.N."/>
        </authorList>
    </citation>
    <scope>NUCLEOTIDE SEQUENCE [GENOMIC DNA]</scope>
</reference>
<reference key="2">
    <citation type="journal article" date="1999" name="Biochemistry">
        <title>N1-(5'-phosphoribosyl)adenosine-5'-monophosphate cyclohydrolase: purification and characterization of a unique metalloenzyme.</title>
        <authorList>
            <person name="D'Ordine R.L."/>
            <person name="Klem T.J."/>
            <person name="Davisson V.J."/>
        </authorList>
    </citation>
    <scope>PROTEIN SEQUENCE OF 2-26</scope>
    <scope>FUNCTION</scope>
    <scope>CATALYTIC ACTIVITY</scope>
    <scope>COFACTOR</scope>
    <scope>ACTIVITY REGULATION</scope>
    <scope>BIOPHYSICOCHEMICAL PROPERTIES</scope>
    <scope>PATHWAY</scope>
    <scope>SUBUNIT</scope>
</reference>
<comment type="function">
    <text evidence="1 2">Catalyzes the hydrolysis of the adenine ring of phosphoribosyl-AMP.</text>
</comment>
<comment type="catalytic activity">
    <reaction evidence="1 2">
        <text>1-(5-phospho-beta-D-ribosyl)-5'-AMP + H2O = 1-(5-phospho-beta-D-ribosyl)-5-[(5-phospho-beta-D-ribosylamino)methylideneamino]imidazole-4-carboxamide</text>
        <dbReference type="Rhea" id="RHEA:20049"/>
        <dbReference type="ChEBI" id="CHEBI:15377"/>
        <dbReference type="ChEBI" id="CHEBI:58435"/>
        <dbReference type="ChEBI" id="CHEBI:59457"/>
        <dbReference type="EC" id="3.5.4.19"/>
    </reaction>
</comment>
<comment type="cofactor">
    <cofactor evidence="1 2">
        <name>Mg(2+)</name>
        <dbReference type="ChEBI" id="CHEBI:18420"/>
    </cofactor>
    <text evidence="1 2">Binds 1 Mg(2+) ion per subunit.</text>
</comment>
<comment type="cofactor">
    <cofactor evidence="1 2">
        <name>Zn(2+)</name>
        <dbReference type="ChEBI" id="CHEBI:29105"/>
    </cofactor>
    <text evidence="1 2">Binds 1 zinc ion per subunit. May play a cocatalytic role and/or a structural role.</text>
</comment>
<comment type="activity regulation">
    <text evidence="2">Reversibly inhibited by EDTA and free zinc ions. Enzyme is inactivated by dialysis against 1,10-phenanthroline, which is a zinc specific chelator.</text>
</comment>
<comment type="biophysicochemical properties">
    <kinetics>
        <KM evidence="2">9.9 uM for phosphoribosyl-AMP</KM>
        <text>kcat is 4.1 sec(-1).</text>
    </kinetics>
    <phDependence>
        <text evidence="2">Optimum pH is 7.5.</text>
    </phDependence>
</comment>
<comment type="pathway">
    <text evidence="1 2">Amino-acid biosynthesis; L-histidine biosynthesis; L-histidine from 5-phospho-alpha-D-ribose 1-diphosphate: step 3/9.</text>
</comment>
<comment type="subunit">
    <text evidence="1 2">Homodimer.</text>
</comment>
<comment type="subcellular location">
    <subcellularLocation>
        <location evidence="1">Cytoplasm</location>
    </subcellularLocation>
</comment>
<comment type="similarity">
    <text evidence="1">Belongs to the PRA-CH family.</text>
</comment>
<name>HIS3_METVA</name>
<proteinExistence type="evidence at protein level"/>
<organism>
    <name type="scientific">Methanococcus vannielii</name>
    <dbReference type="NCBI Taxonomy" id="2187"/>
    <lineage>
        <taxon>Archaea</taxon>
        <taxon>Methanobacteriati</taxon>
        <taxon>Methanobacteriota</taxon>
        <taxon>Methanomada group</taxon>
        <taxon>Methanococci</taxon>
        <taxon>Methanococcales</taxon>
        <taxon>Methanococcaceae</taxon>
        <taxon>Methanococcus</taxon>
    </lineage>
</organism>
<gene>
    <name evidence="1" type="primary">hisI</name>
</gene>
<protein>
    <recommendedName>
        <fullName evidence="1">Phosphoribosyl-AMP cyclohydrolase</fullName>
        <shortName evidence="1">PRA-CH</shortName>
        <ecNumber evidence="1 2">3.5.4.19</ecNumber>
    </recommendedName>
</protein>